<evidence type="ECO:0000255" key="1">
    <source>
        <dbReference type="HAMAP-Rule" id="MF_00420"/>
    </source>
</evidence>
<evidence type="ECO:0000305" key="2"/>
<reference key="1">
    <citation type="journal article" date="2005" name="J. Bacteriol.">
        <title>Complete genome sequence and analysis of the multiresistant nosocomial pathogen Corynebacterium jeikeium K411, a lipid-requiring bacterium of the human skin flora.</title>
        <authorList>
            <person name="Tauch A."/>
            <person name="Kaiser O."/>
            <person name="Hain T."/>
            <person name="Goesmann A."/>
            <person name="Weisshaar B."/>
            <person name="Albersmeier A."/>
            <person name="Bekel T."/>
            <person name="Bischoff N."/>
            <person name="Brune I."/>
            <person name="Chakraborty T."/>
            <person name="Kalinowski J."/>
            <person name="Meyer F."/>
            <person name="Rupp O."/>
            <person name="Schneiker S."/>
            <person name="Viehoever P."/>
            <person name="Puehler A."/>
        </authorList>
    </citation>
    <scope>NUCLEOTIDE SEQUENCE [LARGE SCALE GENOMIC DNA]</scope>
    <source>
        <strain>K411</strain>
    </source>
</reference>
<protein>
    <recommendedName>
        <fullName evidence="1">Phosphoribosylformylglycinamidine synthase subunit PurL</fullName>
        <shortName evidence="1">FGAM synthase</shortName>
        <ecNumber evidence="1">6.3.5.3</ecNumber>
    </recommendedName>
    <alternativeName>
        <fullName evidence="1">Formylglycinamide ribonucleotide amidotransferase subunit II</fullName>
        <shortName evidence="1">FGAR amidotransferase II</shortName>
        <shortName evidence="1">FGAR-AT II</shortName>
    </alternativeName>
    <alternativeName>
        <fullName evidence="1">Glutamine amidotransferase PurL</fullName>
    </alternativeName>
    <alternativeName>
        <fullName evidence="1">Phosphoribosylformylglycinamidine synthase subunit II</fullName>
    </alternativeName>
</protein>
<keyword id="KW-0067">ATP-binding</keyword>
<keyword id="KW-0963">Cytoplasm</keyword>
<keyword id="KW-0436">Ligase</keyword>
<keyword id="KW-0460">Magnesium</keyword>
<keyword id="KW-0479">Metal-binding</keyword>
<keyword id="KW-0547">Nucleotide-binding</keyword>
<keyword id="KW-0658">Purine biosynthesis</keyword>
<keyword id="KW-1185">Reference proteome</keyword>
<dbReference type="EC" id="6.3.5.3" evidence="1"/>
<dbReference type="EMBL" id="CR931997">
    <property type="protein sequence ID" value="CAI36507.1"/>
    <property type="status" value="ALT_INIT"/>
    <property type="molecule type" value="Genomic_DNA"/>
</dbReference>
<dbReference type="RefSeq" id="WP_041626063.1">
    <property type="nucleotide sequence ID" value="NC_007164.1"/>
</dbReference>
<dbReference type="SMR" id="Q4JXF0"/>
<dbReference type="STRING" id="306537.jk0355"/>
<dbReference type="KEGG" id="cjk:jk0355"/>
<dbReference type="PATRIC" id="fig|306537.10.peg.366"/>
<dbReference type="eggNOG" id="COG0046">
    <property type="taxonomic scope" value="Bacteria"/>
</dbReference>
<dbReference type="HOGENOM" id="CLU_003100_0_1_11"/>
<dbReference type="OrthoDB" id="9804441at2"/>
<dbReference type="UniPathway" id="UPA00074">
    <property type="reaction ID" value="UER00128"/>
</dbReference>
<dbReference type="Proteomes" id="UP000000545">
    <property type="component" value="Chromosome"/>
</dbReference>
<dbReference type="GO" id="GO:0005737">
    <property type="term" value="C:cytoplasm"/>
    <property type="evidence" value="ECO:0007669"/>
    <property type="project" value="UniProtKB-SubCell"/>
</dbReference>
<dbReference type="GO" id="GO:0005524">
    <property type="term" value="F:ATP binding"/>
    <property type="evidence" value="ECO:0007669"/>
    <property type="project" value="UniProtKB-UniRule"/>
</dbReference>
<dbReference type="GO" id="GO:0000287">
    <property type="term" value="F:magnesium ion binding"/>
    <property type="evidence" value="ECO:0007669"/>
    <property type="project" value="UniProtKB-UniRule"/>
</dbReference>
<dbReference type="GO" id="GO:0004642">
    <property type="term" value="F:phosphoribosylformylglycinamidine synthase activity"/>
    <property type="evidence" value="ECO:0007669"/>
    <property type="project" value="UniProtKB-UniRule"/>
</dbReference>
<dbReference type="GO" id="GO:0006189">
    <property type="term" value="P:'de novo' IMP biosynthetic process"/>
    <property type="evidence" value="ECO:0007669"/>
    <property type="project" value="UniProtKB-UniRule"/>
</dbReference>
<dbReference type="CDD" id="cd02203">
    <property type="entry name" value="PurL_repeat1"/>
    <property type="match status" value="1"/>
</dbReference>
<dbReference type="CDD" id="cd02204">
    <property type="entry name" value="PurL_repeat2"/>
    <property type="match status" value="1"/>
</dbReference>
<dbReference type="FunFam" id="3.30.1330.10:FF:000004">
    <property type="entry name" value="Phosphoribosylformylglycinamidine synthase subunit PurL"/>
    <property type="match status" value="1"/>
</dbReference>
<dbReference type="Gene3D" id="3.90.650.10">
    <property type="entry name" value="PurM-like C-terminal domain"/>
    <property type="match status" value="2"/>
</dbReference>
<dbReference type="Gene3D" id="3.30.1330.10">
    <property type="entry name" value="PurM-like, N-terminal domain"/>
    <property type="match status" value="2"/>
</dbReference>
<dbReference type="HAMAP" id="MF_00420">
    <property type="entry name" value="PurL_2"/>
    <property type="match status" value="1"/>
</dbReference>
<dbReference type="InterPro" id="IPR010074">
    <property type="entry name" value="PRibForGlyAmidine_synth_PurL"/>
</dbReference>
<dbReference type="InterPro" id="IPR041609">
    <property type="entry name" value="PurL_linker"/>
</dbReference>
<dbReference type="InterPro" id="IPR010918">
    <property type="entry name" value="PurM-like_C_dom"/>
</dbReference>
<dbReference type="InterPro" id="IPR036676">
    <property type="entry name" value="PurM-like_C_sf"/>
</dbReference>
<dbReference type="InterPro" id="IPR016188">
    <property type="entry name" value="PurM-like_N"/>
</dbReference>
<dbReference type="InterPro" id="IPR036921">
    <property type="entry name" value="PurM-like_N_sf"/>
</dbReference>
<dbReference type="NCBIfam" id="TIGR01736">
    <property type="entry name" value="FGAM_synth_II"/>
    <property type="match status" value="1"/>
</dbReference>
<dbReference type="NCBIfam" id="NF002290">
    <property type="entry name" value="PRK01213.1"/>
    <property type="match status" value="1"/>
</dbReference>
<dbReference type="PANTHER" id="PTHR43555">
    <property type="entry name" value="PHOSPHORIBOSYLFORMYLGLYCINAMIDINE SYNTHASE SUBUNIT PURL"/>
    <property type="match status" value="1"/>
</dbReference>
<dbReference type="PANTHER" id="PTHR43555:SF1">
    <property type="entry name" value="PHOSPHORIBOSYLFORMYLGLYCINAMIDINE SYNTHASE SUBUNIT PURL"/>
    <property type="match status" value="1"/>
</dbReference>
<dbReference type="Pfam" id="PF00586">
    <property type="entry name" value="AIRS"/>
    <property type="match status" value="2"/>
</dbReference>
<dbReference type="Pfam" id="PF02769">
    <property type="entry name" value="AIRS_C"/>
    <property type="match status" value="2"/>
</dbReference>
<dbReference type="Pfam" id="PF18072">
    <property type="entry name" value="FGAR-AT_linker"/>
    <property type="match status" value="1"/>
</dbReference>
<dbReference type="PIRSF" id="PIRSF001587">
    <property type="entry name" value="FGAM_synthase_II"/>
    <property type="match status" value="1"/>
</dbReference>
<dbReference type="SUPFAM" id="SSF56042">
    <property type="entry name" value="PurM C-terminal domain-like"/>
    <property type="match status" value="2"/>
</dbReference>
<dbReference type="SUPFAM" id="SSF55326">
    <property type="entry name" value="PurM N-terminal domain-like"/>
    <property type="match status" value="2"/>
</dbReference>
<name>PURL_CORJK</name>
<organism>
    <name type="scientific">Corynebacterium jeikeium (strain K411)</name>
    <dbReference type="NCBI Taxonomy" id="306537"/>
    <lineage>
        <taxon>Bacteria</taxon>
        <taxon>Bacillati</taxon>
        <taxon>Actinomycetota</taxon>
        <taxon>Actinomycetes</taxon>
        <taxon>Mycobacteriales</taxon>
        <taxon>Corynebacteriaceae</taxon>
        <taxon>Corynebacterium</taxon>
    </lineage>
</organism>
<gene>
    <name evidence="1" type="primary">purL</name>
    <name type="ordered locus">jk0355</name>
</gene>
<feature type="chain" id="PRO_0000236652" description="Phosphoribosylformylglycinamidine synthase subunit PurL">
    <location>
        <begin position="1"/>
        <end position="813"/>
    </location>
</feature>
<feature type="active site" evidence="1">
    <location>
        <position position="56"/>
    </location>
</feature>
<feature type="active site" description="Proton acceptor" evidence="1">
    <location>
        <position position="107"/>
    </location>
</feature>
<feature type="binding site" evidence="1">
    <location>
        <position position="59"/>
    </location>
    <ligand>
        <name>ATP</name>
        <dbReference type="ChEBI" id="CHEBI:30616"/>
    </ligand>
</feature>
<feature type="binding site" evidence="1">
    <location>
        <position position="103"/>
    </location>
    <ligand>
        <name>ATP</name>
        <dbReference type="ChEBI" id="CHEBI:30616"/>
    </ligand>
</feature>
<feature type="binding site" evidence="1">
    <location>
        <position position="105"/>
    </location>
    <ligand>
        <name>Mg(2+)</name>
        <dbReference type="ChEBI" id="CHEBI:18420"/>
        <label>1</label>
    </ligand>
</feature>
<feature type="binding site" evidence="1">
    <location>
        <begin position="106"/>
        <end position="109"/>
    </location>
    <ligand>
        <name>substrate</name>
    </ligand>
</feature>
<feature type="binding site" evidence="1">
    <location>
        <position position="128"/>
    </location>
    <ligand>
        <name>substrate</name>
    </ligand>
</feature>
<feature type="binding site" evidence="1">
    <location>
        <position position="129"/>
    </location>
    <ligand>
        <name>Mg(2+)</name>
        <dbReference type="ChEBI" id="CHEBI:18420"/>
        <label>2</label>
    </ligand>
</feature>
<feature type="binding site" evidence="1">
    <location>
        <position position="253"/>
    </location>
    <ligand>
        <name>substrate</name>
    </ligand>
</feature>
<feature type="binding site" evidence="1">
    <location>
        <position position="281"/>
    </location>
    <ligand>
        <name>Mg(2+)</name>
        <dbReference type="ChEBI" id="CHEBI:18420"/>
        <label>2</label>
    </ligand>
</feature>
<feature type="binding site" evidence="1">
    <location>
        <begin position="325"/>
        <end position="327"/>
    </location>
    <ligand>
        <name>substrate</name>
    </ligand>
</feature>
<feature type="binding site" evidence="1">
    <location>
        <position position="511"/>
    </location>
    <ligand>
        <name>ATP</name>
        <dbReference type="ChEBI" id="CHEBI:30616"/>
    </ligand>
</feature>
<feature type="binding site" evidence="1">
    <location>
        <position position="548"/>
    </location>
    <ligand>
        <name>ATP</name>
        <dbReference type="ChEBI" id="CHEBI:30616"/>
    </ligand>
</feature>
<feature type="binding site" evidence="1">
    <location>
        <position position="549"/>
    </location>
    <ligand>
        <name>Mg(2+)</name>
        <dbReference type="ChEBI" id="CHEBI:18420"/>
        <label>1</label>
    </ligand>
</feature>
<feature type="binding site" evidence="1">
    <location>
        <position position="551"/>
    </location>
    <ligand>
        <name>substrate</name>
    </ligand>
</feature>
<accession>Q4JXF0</accession>
<proteinExistence type="inferred from homology"/>
<sequence>MIHNDTVADAKANPDLEQPYHELGLKDDEYARIKELLGRRPTDAELAMYSVMWSEHCSYKSSKTHLRYFGETTTEEMKSKMLAGIGENAGVIDIGDGHAVTFKVESHNHPSYVEPYQGAATGVGGIVRDIMAMGARPVAVMDQLRFGPADLPDTQRVLPGVVAGVGGYGNSLGLPNIGGETVFDATYAGNPLVNALCVGTLKTEDLKLAFASGKGNRVILFGSRTGLDGIGGVSVLASDTFEEGAERKLPAVQVGDPFAEKVLIECCLDLYRANVVVGIQDLGGAGLSCATAELASAGDGGMHINLDNVHLRAEGMTAAEILSSESQERMCAVVEPENVDAFMEICRKWDVLASDIGCVTDGEHLVIEHCGEIVVDASAHTMAEEGPVYERPYERPAEQDELNEPRGVELPETSQEVRQQILDLAASPALCSREFITEQYDRYVRGNTVAAKDADAGVLRIDEETGRGIAVSTDASGRYARLDPRTGAQLALAEAYRNVSVTGATPVAVSNCLNFGSPEDPGVMWQFREAVHGLADGCKEMGIPVTGGNVSFYNQTGDTAILPTPVIAVLGTIDDCARRIPQQLPKQAGAEAGADESQEQYHLVLVGAETREELGGSIWQQVVHDELAGLPPQVDLSVEQRLGAFITDQRDKIVAAHDLSEGGLSQAVVELAIQSGRGMAVNPMLSQHESAVAQGRTLAQQAAVGLFSETASRVLLAVRSEDYGDLMRDLAETGLTGGWIGLTGVSDAAGQPVIRFGSGVYPVLPFGGEIELDPAKQHDDDFDIVISLDEAETAWKSTLPALFSHAAGNNSVI</sequence>
<comment type="function">
    <text evidence="1">Part of the phosphoribosylformylglycinamidine synthase complex involved in the purines biosynthetic pathway. Catalyzes the ATP-dependent conversion of formylglycinamide ribonucleotide (FGAR) and glutamine to yield formylglycinamidine ribonucleotide (FGAM) and glutamate. The FGAM synthase complex is composed of three subunits. PurQ produces an ammonia molecule by converting glutamine to glutamate. PurL transfers the ammonia molecule to FGAR to form FGAM in an ATP-dependent manner. PurS interacts with PurQ and PurL and is thought to assist in the transfer of the ammonia molecule from PurQ to PurL.</text>
</comment>
<comment type="catalytic activity">
    <reaction evidence="1">
        <text>N(2)-formyl-N(1)-(5-phospho-beta-D-ribosyl)glycinamide + L-glutamine + ATP + H2O = 2-formamido-N(1)-(5-O-phospho-beta-D-ribosyl)acetamidine + L-glutamate + ADP + phosphate + H(+)</text>
        <dbReference type="Rhea" id="RHEA:17129"/>
        <dbReference type="ChEBI" id="CHEBI:15377"/>
        <dbReference type="ChEBI" id="CHEBI:15378"/>
        <dbReference type="ChEBI" id="CHEBI:29985"/>
        <dbReference type="ChEBI" id="CHEBI:30616"/>
        <dbReference type="ChEBI" id="CHEBI:43474"/>
        <dbReference type="ChEBI" id="CHEBI:58359"/>
        <dbReference type="ChEBI" id="CHEBI:147286"/>
        <dbReference type="ChEBI" id="CHEBI:147287"/>
        <dbReference type="ChEBI" id="CHEBI:456216"/>
        <dbReference type="EC" id="6.3.5.3"/>
    </reaction>
</comment>
<comment type="pathway">
    <text evidence="1">Purine metabolism; IMP biosynthesis via de novo pathway; 5-amino-1-(5-phospho-D-ribosyl)imidazole from N(2)-formyl-N(1)-(5-phospho-D-ribosyl)glycinamide: step 1/2.</text>
</comment>
<comment type="subunit">
    <text evidence="1">Monomer. Part of the FGAM synthase complex composed of 1 PurL, 1 PurQ and 2 PurS subunits.</text>
</comment>
<comment type="subcellular location">
    <subcellularLocation>
        <location evidence="1">Cytoplasm</location>
    </subcellularLocation>
</comment>
<comment type="similarity">
    <text evidence="1">Belongs to the FGAMS family.</text>
</comment>
<comment type="sequence caution" evidence="2">
    <conflict type="erroneous initiation">
        <sequence resource="EMBL-CDS" id="CAI36507"/>
    </conflict>
    <text>Truncated N-terminus.</text>
</comment>